<dbReference type="EC" id="1.1.1.37" evidence="1"/>
<dbReference type="EMBL" id="CP000323">
    <property type="protein sequence ID" value="ABE75821.1"/>
    <property type="molecule type" value="Genomic_DNA"/>
</dbReference>
<dbReference type="SMR" id="Q1Q932"/>
<dbReference type="STRING" id="335284.Pcryo_2044"/>
<dbReference type="KEGG" id="pcr:Pcryo_2044"/>
<dbReference type="eggNOG" id="COG0039">
    <property type="taxonomic scope" value="Bacteria"/>
</dbReference>
<dbReference type="HOGENOM" id="CLU_040727_2_0_6"/>
<dbReference type="Proteomes" id="UP000002425">
    <property type="component" value="Chromosome"/>
</dbReference>
<dbReference type="GO" id="GO:0030060">
    <property type="term" value="F:L-malate dehydrogenase (NAD+) activity"/>
    <property type="evidence" value="ECO:0007669"/>
    <property type="project" value="UniProtKB-UniRule"/>
</dbReference>
<dbReference type="GO" id="GO:0006108">
    <property type="term" value="P:malate metabolic process"/>
    <property type="evidence" value="ECO:0007669"/>
    <property type="project" value="InterPro"/>
</dbReference>
<dbReference type="GO" id="GO:0006099">
    <property type="term" value="P:tricarboxylic acid cycle"/>
    <property type="evidence" value="ECO:0007669"/>
    <property type="project" value="UniProtKB-UniRule"/>
</dbReference>
<dbReference type="CDD" id="cd01338">
    <property type="entry name" value="MDH_chloroplast-like"/>
    <property type="match status" value="1"/>
</dbReference>
<dbReference type="FunFam" id="3.40.50.720:FF:000010">
    <property type="entry name" value="Malate dehydrogenase"/>
    <property type="match status" value="1"/>
</dbReference>
<dbReference type="FunFam" id="3.90.110.10:FF:000002">
    <property type="entry name" value="Malate dehydrogenase"/>
    <property type="match status" value="1"/>
</dbReference>
<dbReference type="Gene3D" id="3.90.110.10">
    <property type="entry name" value="Lactate dehydrogenase/glycoside hydrolase, family 4, C-terminal"/>
    <property type="match status" value="1"/>
</dbReference>
<dbReference type="Gene3D" id="3.40.50.720">
    <property type="entry name" value="NAD(P)-binding Rossmann-like Domain"/>
    <property type="match status" value="1"/>
</dbReference>
<dbReference type="HAMAP" id="MF_01517">
    <property type="entry name" value="Malate_dehydrog_2"/>
    <property type="match status" value="1"/>
</dbReference>
<dbReference type="InterPro" id="IPR001557">
    <property type="entry name" value="L-lactate/malate_DH"/>
</dbReference>
<dbReference type="InterPro" id="IPR022383">
    <property type="entry name" value="Lactate/malate_DH_C"/>
</dbReference>
<dbReference type="InterPro" id="IPR001236">
    <property type="entry name" value="Lactate/malate_DH_N"/>
</dbReference>
<dbReference type="InterPro" id="IPR015955">
    <property type="entry name" value="Lactate_DH/Glyco_Ohase_4_C"/>
</dbReference>
<dbReference type="InterPro" id="IPR001252">
    <property type="entry name" value="Malate_DH_AS"/>
</dbReference>
<dbReference type="InterPro" id="IPR010945">
    <property type="entry name" value="Malate_DH_type2"/>
</dbReference>
<dbReference type="InterPro" id="IPR036291">
    <property type="entry name" value="NAD(P)-bd_dom_sf"/>
</dbReference>
<dbReference type="NCBIfam" id="TIGR01759">
    <property type="entry name" value="MalateDH-SF1"/>
    <property type="match status" value="1"/>
</dbReference>
<dbReference type="NCBIfam" id="NF003916">
    <property type="entry name" value="PRK05442.1"/>
    <property type="match status" value="1"/>
</dbReference>
<dbReference type="PANTHER" id="PTHR23382">
    <property type="entry name" value="MALATE DEHYDROGENASE"/>
    <property type="match status" value="1"/>
</dbReference>
<dbReference type="Pfam" id="PF02866">
    <property type="entry name" value="Ldh_1_C"/>
    <property type="match status" value="1"/>
</dbReference>
<dbReference type="Pfam" id="PF00056">
    <property type="entry name" value="Ldh_1_N"/>
    <property type="match status" value="1"/>
</dbReference>
<dbReference type="PIRSF" id="PIRSF000102">
    <property type="entry name" value="Lac_mal_DH"/>
    <property type="match status" value="1"/>
</dbReference>
<dbReference type="SUPFAM" id="SSF56327">
    <property type="entry name" value="LDH C-terminal domain-like"/>
    <property type="match status" value="1"/>
</dbReference>
<dbReference type="SUPFAM" id="SSF51735">
    <property type="entry name" value="NAD(P)-binding Rossmann-fold domains"/>
    <property type="match status" value="1"/>
</dbReference>
<dbReference type="PROSITE" id="PS00068">
    <property type="entry name" value="MDH"/>
    <property type="match status" value="1"/>
</dbReference>
<name>MDH_PSYCK</name>
<accession>Q1Q932</accession>
<sequence length="329" mass="35157">MSMKQPVRVAVTGAAGNISYAMLFRIASGEMLGKDQPVILQLLEIAPALDALKGVVMELEDCAFPLLAGVVQTDDATVAFKDVDYALLVGSRPRGPGMERKDLLEANAAIFSAQGKALNDVASRDVKVLVVGNPANTNAVIAQRNAPDLDPRNFTAMTRLDHNRAMAQLAGKTDSTVNDVKKMIIWGNHSSTQYPDLTASTVNGKPALDLVDRAWYEGTYIPEVQQRGAAIIKARGASSAASAANAAIAHVRTWVMGTDENDWVSMGVYSNGEYGIAKGLIYSFPVTCANGDWSIVDGVDVSSDFSKEKMAATEQELSEERDAVAHLLP</sequence>
<keyword id="KW-0520">NAD</keyword>
<keyword id="KW-0560">Oxidoreductase</keyword>
<keyword id="KW-0816">Tricarboxylic acid cycle</keyword>
<evidence type="ECO:0000255" key="1">
    <source>
        <dbReference type="HAMAP-Rule" id="MF_01517"/>
    </source>
</evidence>
<proteinExistence type="inferred from homology"/>
<reference key="1">
    <citation type="submission" date="2006-03" db="EMBL/GenBank/DDBJ databases">
        <title>Complete sequence of chromosome of Psychrobacter cryohalolentis K5.</title>
        <authorList>
            <consortium name="US DOE Joint Genome Institute"/>
            <person name="Copeland A."/>
            <person name="Lucas S."/>
            <person name="Lapidus A."/>
            <person name="Barry K."/>
            <person name="Detter J.C."/>
            <person name="Glavina T."/>
            <person name="Hammon N."/>
            <person name="Israni S."/>
            <person name="Dalin E."/>
            <person name="Tice H."/>
            <person name="Pitluck S."/>
            <person name="Brettin T."/>
            <person name="Bruce D."/>
            <person name="Han C."/>
            <person name="Tapia R."/>
            <person name="Sims D.R."/>
            <person name="Gilna P."/>
            <person name="Schmutz J."/>
            <person name="Larimer F."/>
            <person name="Land M."/>
            <person name="Hauser L."/>
            <person name="Kyrpides N."/>
            <person name="Kim E."/>
            <person name="Richardson P."/>
        </authorList>
    </citation>
    <scope>NUCLEOTIDE SEQUENCE [LARGE SCALE GENOMIC DNA]</scope>
    <source>
        <strain>ATCC BAA-1226 / DSM 17306 / VKM B-2378 / K5</strain>
    </source>
</reference>
<feature type="chain" id="PRO_0000294400" description="Malate dehydrogenase">
    <location>
        <begin position="1"/>
        <end position="329"/>
    </location>
</feature>
<feature type="active site" description="Proton acceptor" evidence="1">
    <location>
        <position position="189"/>
    </location>
</feature>
<feature type="binding site" evidence="1">
    <location>
        <begin position="13"/>
        <end position="19"/>
    </location>
    <ligand>
        <name>NAD(+)</name>
        <dbReference type="ChEBI" id="CHEBI:57540"/>
    </ligand>
</feature>
<feature type="binding site" evidence="1">
    <location>
        <position position="94"/>
    </location>
    <ligand>
        <name>substrate</name>
    </ligand>
</feature>
<feature type="binding site" evidence="1">
    <location>
        <position position="100"/>
    </location>
    <ligand>
        <name>substrate</name>
    </ligand>
</feature>
<feature type="binding site" evidence="1">
    <location>
        <position position="107"/>
    </location>
    <ligand>
        <name>NAD(+)</name>
        <dbReference type="ChEBI" id="CHEBI:57540"/>
    </ligand>
</feature>
<feature type="binding site" evidence="1">
    <location>
        <position position="114"/>
    </location>
    <ligand>
        <name>NAD(+)</name>
        <dbReference type="ChEBI" id="CHEBI:57540"/>
    </ligand>
</feature>
<feature type="binding site" evidence="1">
    <location>
        <begin position="131"/>
        <end position="133"/>
    </location>
    <ligand>
        <name>NAD(+)</name>
        <dbReference type="ChEBI" id="CHEBI:57540"/>
    </ligand>
</feature>
<feature type="binding site" evidence="1">
    <location>
        <position position="133"/>
    </location>
    <ligand>
        <name>substrate</name>
    </ligand>
</feature>
<feature type="binding site" evidence="1">
    <location>
        <position position="164"/>
    </location>
    <ligand>
        <name>substrate</name>
    </ligand>
</feature>
<comment type="function">
    <text evidence="1">Catalyzes the reversible oxidation of malate to oxaloacetate.</text>
</comment>
<comment type="catalytic activity">
    <reaction evidence="1">
        <text>(S)-malate + NAD(+) = oxaloacetate + NADH + H(+)</text>
        <dbReference type="Rhea" id="RHEA:21432"/>
        <dbReference type="ChEBI" id="CHEBI:15378"/>
        <dbReference type="ChEBI" id="CHEBI:15589"/>
        <dbReference type="ChEBI" id="CHEBI:16452"/>
        <dbReference type="ChEBI" id="CHEBI:57540"/>
        <dbReference type="ChEBI" id="CHEBI:57945"/>
        <dbReference type="EC" id="1.1.1.37"/>
    </reaction>
</comment>
<comment type="similarity">
    <text evidence="1">Belongs to the LDH/MDH superfamily. MDH type 2 family.</text>
</comment>
<protein>
    <recommendedName>
        <fullName evidence="1">Malate dehydrogenase</fullName>
        <ecNumber evidence="1">1.1.1.37</ecNumber>
    </recommendedName>
</protein>
<gene>
    <name evidence="1" type="primary">mdh</name>
    <name type="ordered locus">Pcryo_2044</name>
</gene>
<organism>
    <name type="scientific">Psychrobacter cryohalolentis (strain ATCC BAA-1226 / DSM 17306 / VKM B-2378 / K5)</name>
    <dbReference type="NCBI Taxonomy" id="335284"/>
    <lineage>
        <taxon>Bacteria</taxon>
        <taxon>Pseudomonadati</taxon>
        <taxon>Pseudomonadota</taxon>
        <taxon>Gammaproteobacteria</taxon>
        <taxon>Moraxellales</taxon>
        <taxon>Moraxellaceae</taxon>
        <taxon>Psychrobacter</taxon>
    </lineage>
</organism>